<dbReference type="EMBL" id="AF074613">
    <property type="protein sequence ID" value="AAC70136.1"/>
    <property type="molecule type" value="Genomic_DNA"/>
</dbReference>
<dbReference type="EMBL" id="AB011549">
    <property type="protein sequence ID" value="BAA31790.2"/>
    <property type="molecule type" value="Genomic_DNA"/>
</dbReference>
<dbReference type="RefSeq" id="NP_052640.1">
    <property type="nucleotide sequence ID" value="NC_002128.1"/>
</dbReference>
<dbReference type="RefSeq" id="WP_000772446.1">
    <property type="nucleotide sequence ID" value="NZ_VOAI01000050.1"/>
</dbReference>
<dbReference type="SMR" id="P62557"/>
<dbReference type="GeneID" id="1789690"/>
<dbReference type="KEGG" id="ece:Z_L7068"/>
<dbReference type="KEGG" id="ecs:pO157p33"/>
<dbReference type="PATRIC" id="fig|386585.9.peg.38"/>
<dbReference type="eggNOG" id="COG1192">
    <property type="taxonomic scope" value="Bacteria"/>
</dbReference>
<dbReference type="HOGENOM" id="CLU_037612_9_0_6"/>
<dbReference type="OMA" id="SYAIKPT"/>
<dbReference type="Proteomes" id="UP000000558">
    <property type="component" value="Plasmid pO157"/>
</dbReference>
<dbReference type="Proteomes" id="UP000002519">
    <property type="component" value="Plasmid pO157"/>
</dbReference>
<dbReference type="GO" id="GO:0030541">
    <property type="term" value="P:plasmid partitioning"/>
    <property type="evidence" value="ECO:0007669"/>
    <property type="project" value="UniProtKB-KW"/>
</dbReference>
<dbReference type="CDD" id="cd02042">
    <property type="entry name" value="ParAB_family"/>
    <property type="match status" value="1"/>
</dbReference>
<dbReference type="Gene3D" id="3.40.50.300">
    <property type="entry name" value="P-loop containing nucleotide triphosphate hydrolases"/>
    <property type="match status" value="1"/>
</dbReference>
<dbReference type="InterPro" id="IPR025669">
    <property type="entry name" value="AAA_dom"/>
</dbReference>
<dbReference type="InterPro" id="IPR050678">
    <property type="entry name" value="DNA_Partitioning_ATPase"/>
</dbReference>
<dbReference type="InterPro" id="IPR027417">
    <property type="entry name" value="P-loop_NTPase"/>
</dbReference>
<dbReference type="NCBIfam" id="NF010259">
    <property type="entry name" value="PRK13705.1"/>
    <property type="match status" value="1"/>
</dbReference>
<dbReference type="PANTHER" id="PTHR13696">
    <property type="entry name" value="P-LOOP CONTAINING NUCLEOSIDE TRIPHOSPHATE HYDROLASE"/>
    <property type="match status" value="1"/>
</dbReference>
<dbReference type="PANTHER" id="PTHR13696:SF52">
    <property type="entry name" value="PARA FAMILY PROTEIN CT_582"/>
    <property type="match status" value="1"/>
</dbReference>
<dbReference type="Pfam" id="PF13614">
    <property type="entry name" value="AAA_31"/>
    <property type="match status" value="1"/>
</dbReference>
<dbReference type="SUPFAM" id="SSF52540">
    <property type="entry name" value="P-loop containing nucleoside triphosphate hydrolases"/>
    <property type="match status" value="1"/>
</dbReference>
<evidence type="ECO:0000250" key="1"/>
<evidence type="ECO:0000305" key="2"/>
<name>SOPA_ECO57</name>
<organism>
    <name type="scientific">Escherichia coli O157:H7</name>
    <dbReference type="NCBI Taxonomy" id="83334"/>
    <lineage>
        <taxon>Bacteria</taxon>
        <taxon>Pseudomonadati</taxon>
        <taxon>Pseudomonadota</taxon>
        <taxon>Gammaproteobacteria</taxon>
        <taxon>Enterobacterales</taxon>
        <taxon>Enterobacteriaceae</taxon>
        <taxon>Escherichia</taxon>
    </lineage>
</organism>
<proteinExistence type="inferred from homology"/>
<feature type="chain" id="PRO_0000068406" description="Protein SopA">
    <location>
        <begin position="1"/>
        <end position="388"/>
    </location>
</feature>
<geneLocation type="plasmid">
    <name>pO157</name>
</geneLocation>
<comment type="function">
    <text evidence="1">This protein is essential for plasmid partition. It ensures the proper distribution of newly replicated plasmids to daughter cells during cell division. SopA is trans-acting (By similarity).</text>
</comment>
<comment type="similarity">
    <text evidence="2">Belongs to the ParA family.</text>
</comment>
<protein>
    <recommendedName>
        <fullName>Protein SopA</fullName>
    </recommendedName>
    <alternativeName>
        <fullName>Plasmid partition protein A</fullName>
    </alternativeName>
</protein>
<gene>
    <name type="primary">sopA</name>
    <name type="synonym">A</name>
    <name type="ordered locus">L7068</name>
    <name type="ordered locus">ECO57PM33</name>
</gene>
<reference key="1">
    <citation type="journal article" date="1998" name="Nucleic Acids Res.">
        <title>The complete DNA sequence and analysis of the large virulence plasmid of Escherichia coli O157:H7.</title>
        <authorList>
            <person name="Burland V."/>
            <person name="Shao Y."/>
            <person name="Perna N.T."/>
            <person name="Plunkett G. III"/>
            <person name="Sofia H.J."/>
            <person name="Blattner F.R."/>
        </authorList>
    </citation>
    <scope>NUCLEOTIDE SEQUENCE [LARGE SCALE GENOMIC DNA]</scope>
    <source>
        <strain>O157:H7 / EDL933 / ATCC 700927 / EHEC</strain>
    </source>
</reference>
<reference key="2">
    <citation type="journal article" date="1998" name="DNA Res.">
        <title>Complete nucleotide sequences of 93-kb and 3.3-kb plasmids of an enterohemorrhagic Escherichia coli O157:H7 derived from Sakai outbreak.</title>
        <authorList>
            <person name="Makino K."/>
            <person name="Ishii K."/>
            <person name="Yasunaga T."/>
            <person name="Hattori M."/>
            <person name="Yokoyama K."/>
            <person name="Yatsudo H.C."/>
            <person name="Kubota Y."/>
            <person name="Yamaichi Y."/>
            <person name="Iida T."/>
            <person name="Yamamoto K."/>
            <person name="Honda T."/>
            <person name="Han C.G."/>
            <person name="Ohtsubo A."/>
            <person name="Kasamatsu M."/>
            <person name="Hayashi T."/>
            <person name="Kuhara S."/>
            <person name="Shinagawa H."/>
        </authorList>
    </citation>
    <scope>NUCLEOTIDE SEQUENCE [LARGE SCALE GENOMIC DNA]</scope>
    <source>
        <strain>O157:H7 / Sakai / RIMD 0509952 / EHEC</strain>
    </source>
</reference>
<keyword id="KW-0614">Plasmid</keyword>
<keyword id="KW-0616">Plasmid partition</keyword>
<keyword id="KW-1185">Reference proteome</keyword>
<sequence length="388" mass="43660">MKLMETLNQCINAGHEMTKAIAIAQFNDDSPEARKITRRWRIGEAADLVGVSSQAIRDAEKAGRLPHPDMEIRGRVEQRVGYTIEQINHMRDVFGTRLRRAEDVFPPVIGVAAHKGGVYKTSVSVHLAQDLALKGLRVLLVEGNDPQGTASMYHGWVPDLHIHAEDTLLPFYLGEKDDVTYAIKPTCWPGLDIIPSCLALHRIETELMGKFDEGKLPTDPHLMLRLAIETVAHDYDVIVIDSAPNLGIGTINVVCAADVLIVPTPAELFDYTSALQFFDMLRDLLKNVDLKGFEPDVRILLTKYSNSNGSQSPWMEEQIRDAWGSMVLKNVVRETDEVGKGQIRMRTVFEQAIDQRSSTGAWRNALSIWEPVCNEIFDRLIKPRWEIR</sequence>
<accession>P62557</accession>
<accession>O82893</accession>
<accession>P08866</accession>